<organism>
    <name type="scientific">Bordetella petrii (strain ATCC BAA-461 / DSM 12804 / CCUG 43448)</name>
    <dbReference type="NCBI Taxonomy" id="340100"/>
    <lineage>
        <taxon>Bacteria</taxon>
        <taxon>Pseudomonadati</taxon>
        <taxon>Pseudomonadota</taxon>
        <taxon>Betaproteobacteria</taxon>
        <taxon>Burkholderiales</taxon>
        <taxon>Alcaligenaceae</taxon>
        <taxon>Bordetella</taxon>
    </lineage>
</organism>
<sequence>MANYLPSSPAWLAFSQAAKSASRGGERLRIIEAAGLRVDLTAQPQSDSLDNAAQDLLAQQNFDAARAQLYDGGEANWTERRPAWHTALRADNPPPAVAQDILAERERVRRFVRELDQSLAYDCVLHLGIGGSDWGPRMVTRALRHGGLRRNIQFASNVDSHAVADAIGQLDPRRTLVIVASKSFTTTEPLANAEVAMNWLRDAGVADPIKHVVAVTANVDAALDFGISPDRVFRFWDWVGGRYSLWSAIGLPIALALGNEALDQLLAGAAAMDQHFLQAPLRKNAPLQMALAGLANRSVLGYATLAITPYDSRLMHLVPWAQQLEMESLGKVASRDGTPVGVPTGPVVWGMPGTDCQHTFFQWLHQDTTGAPVDFIVCERPDHAYARHHNMLIANCLAQRSALLRGKSYEDILQEIREHEPDLQRAEVLARHRVHPGGRPSNLIVLPRLDAYSLGALLALYEHKVFAQGVLWGINPFDQWGVEFGKLLAKRIIRELDAPSADTSGDQDPSTRYWIDSLSRR</sequence>
<feature type="chain" id="PRO_1000125697" description="Glucose-6-phosphate isomerase">
    <location>
        <begin position="1"/>
        <end position="521"/>
    </location>
</feature>
<feature type="active site" description="Proton donor" evidence="1">
    <location>
        <position position="327"/>
    </location>
</feature>
<feature type="active site" evidence="1">
    <location>
        <position position="358"/>
    </location>
</feature>
<feature type="active site" evidence="1">
    <location>
        <position position="486"/>
    </location>
</feature>
<dbReference type="EC" id="5.3.1.9" evidence="1"/>
<dbReference type="EMBL" id="AM902716">
    <property type="protein sequence ID" value="CAP44370.1"/>
    <property type="molecule type" value="Genomic_DNA"/>
</dbReference>
<dbReference type="SMR" id="A9I734"/>
<dbReference type="STRING" id="94624.Bpet4022"/>
<dbReference type="KEGG" id="bpt:Bpet4022"/>
<dbReference type="eggNOG" id="COG0166">
    <property type="taxonomic scope" value="Bacteria"/>
</dbReference>
<dbReference type="UniPathway" id="UPA00109">
    <property type="reaction ID" value="UER00181"/>
</dbReference>
<dbReference type="UniPathway" id="UPA00138"/>
<dbReference type="Proteomes" id="UP000001225">
    <property type="component" value="Chromosome"/>
</dbReference>
<dbReference type="GO" id="GO:0005829">
    <property type="term" value="C:cytosol"/>
    <property type="evidence" value="ECO:0007669"/>
    <property type="project" value="TreeGrafter"/>
</dbReference>
<dbReference type="GO" id="GO:0097367">
    <property type="term" value="F:carbohydrate derivative binding"/>
    <property type="evidence" value="ECO:0007669"/>
    <property type="project" value="InterPro"/>
</dbReference>
<dbReference type="GO" id="GO:0004347">
    <property type="term" value="F:glucose-6-phosphate isomerase activity"/>
    <property type="evidence" value="ECO:0007669"/>
    <property type="project" value="UniProtKB-UniRule"/>
</dbReference>
<dbReference type="GO" id="GO:0048029">
    <property type="term" value="F:monosaccharide binding"/>
    <property type="evidence" value="ECO:0007669"/>
    <property type="project" value="TreeGrafter"/>
</dbReference>
<dbReference type="GO" id="GO:0006094">
    <property type="term" value="P:gluconeogenesis"/>
    <property type="evidence" value="ECO:0007669"/>
    <property type="project" value="UniProtKB-UniRule"/>
</dbReference>
<dbReference type="GO" id="GO:0051156">
    <property type="term" value="P:glucose 6-phosphate metabolic process"/>
    <property type="evidence" value="ECO:0007669"/>
    <property type="project" value="TreeGrafter"/>
</dbReference>
<dbReference type="GO" id="GO:0006096">
    <property type="term" value="P:glycolytic process"/>
    <property type="evidence" value="ECO:0007669"/>
    <property type="project" value="UniProtKB-UniRule"/>
</dbReference>
<dbReference type="CDD" id="cd05015">
    <property type="entry name" value="SIS_PGI_1"/>
    <property type="match status" value="1"/>
</dbReference>
<dbReference type="CDD" id="cd05016">
    <property type="entry name" value="SIS_PGI_2"/>
    <property type="match status" value="1"/>
</dbReference>
<dbReference type="Gene3D" id="1.10.1390.10">
    <property type="match status" value="1"/>
</dbReference>
<dbReference type="Gene3D" id="3.40.50.10490">
    <property type="entry name" value="Glucose-6-phosphate isomerase like protein, domain 1"/>
    <property type="match status" value="2"/>
</dbReference>
<dbReference type="HAMAP" id="MF_00473">
    <property type="entry name" value="G6P_isomerase"/>
    <property type="match status" value="1"/>
</dbReference>
<dbReference type="InterPro" id="IPR001672">
    <property type="entry name" value="G6P_Isomerase"/>
</dbReference>
<dbReference type="InterPro" id="IPR023096">
    <property type="entry name" value="G6P_Isomerase_C"/>
</dbReference>
<dbReference type="InterPro" id="IPR018189">
    <property type="entry name" value="Phosphoglucose_isomerase_CS"/>
</dbReference>
<dbReference type="InterPro" id="IPR046348">
    <property type="entry name" value="SIS_dom_sf"/>
</dbReference>
<dbReference type="InterPro" id="IPR035476">
    <property type="entry name" value="SIS_PGI_1"/>
</dbReference>
<dbReference type="InterPro" id="IPR035482">
    <property type="entry name" value="SIS_PGI_2"/>
</dbReference>
<dbReference type="NCBIfam" id="NF001211">
    <property type="entry name" value="PRK00179.1"/>
    <property type="match status" value="1"/>
</dbReference>
<dbReference type="PANTHER" id="PTHR11469">
    <property type="entry name" value="GLUCOSE-6-PHOSPHATE ISOMERASE"/>
    <property type="match status" value="1"/>
</dbReference>
<dbReference type="PANTHER" id="PTHR11469:SF1">
    <property type="entry name" value="GLUCOSE-6-PHOSPHATE ISOMERASE"/>
    <property type="match status" value="1"/>
</dbReference>
<dbReference type="Pfam" id="PF00342">
    <property type="entry name" value="PGI"/>
    <property type="match status" value="1"/>
</dbReference>
<dbReference type="PRINTS" id="PR00662">
    <property type="entry name" value="G6PISOMERASE"/>
</dbReference>
<dbReference type="SUPFAM" id="SSF53697">
    <property type="entry name" value="SIS domain"/>
    <property type="match status" value="1"/>
</dbReference>
<dbReference type="PROSITE" id="PS00765">
    <property type="entry name" value="P_GLUCOSE_ISOMERASE_1"/>
    <property type="match status" value="1"/>
</dbReference>
<dbReference type="PROSITE" id="PS00174">
    <property type="entry name" value="P_GLUCOSE_ISOMERASE_2"/>
    <property type="match status" value="1"/>
</dbReference>
<dbReference type="PROSITE" id="PS51463">
    <property type="entry name" value="P_GLUCOSE_ISOMERASE_3"/>
    <property type="match status" value="1"/>
</dbReference>
<protein>
    <recommendedName>
        <fullName evidence="1">Glucose-6-phosphate isomerase</fullName>
        <shortName evidence="1">GPI</shortName>
        <ecNumber evidence="1">5.3.1.9</ecNumber>
    </recommendedName>
    <alternativeName>
        <fullName evidence="1">Phosphoglucose isomerase</fullName>
        <shortName evidence="1">PGI</shortName>
    </alternativeName>
    <alternativeName>
        <fullName evidence="1">Phosphohexose isomerase</fullName>
        <shortName evidence="1">PHI</shortName>
    </alternativeName>
</protein>
<name>G6PI_BORPD</name>
<accession>A9I734</accession>
<comment type="function">
    <text evidence="1">Catalyzes the reversible isomerization of glucose-6-phosphate to fructose-6-phosphate.</text>
</comment>
<comment type="catalytic activity">
    <reaction evidence="1">
        <text>alpha-D-glucose 6-phosphate = beta-D-fructose 6-phosphate</text>
        <dbReference type="Rhea" id="RHEA:11816"/>
        <dbReference type="ChEBI" id="CHEBI:57634"/>
        <dbReference type="ChEBI" id="CHEBI:58225"/>
        <dbReference type="EC" id="5.3.1.9"/>
    </reaction>
</comment>
<comment type="pathway">
    <text evidence="1">Carbohydrate biosynthesis; gluconeogenesis.</text>
</comment>
<comment type="pathway">
    <text evidence="1">Carbohydrate degradation; glycolysis; D-glyceraldehyde 3-phosphate and glycerone phosphate from D-glucose: step 2/4.</text>
</comment>
<comment type="subcellular location">
    <subcellularLocation>
        <location evidence="1">Cytoplasm</location>
    </subcellularLocation>
</comment>
<comment type="similarity">
    <text evidence="1">Belongs to the GPI family.</text>
</comment>
<keyword id="KW-0963">Cytoplasm</keyword>
<keyword id="KW-0312">Gluconeogenesis</keyword>
<keyword id="KW-0324">Glycolysis</keyword>
<keyword id="KW-0413">Isomerase</keyword>
<proteinExistence type="inferred from homology"/>
<evidence type="ECO:0000255" key="1">
    <source>
        <dbReference type="HAMAP-Rule" id="MF_00473"/>
    </source>
</evidence>
<gene>
    <name evidence="1" type="primary">pgi</name>
    <name type="ordered locus">Bpet4022</name>
</gene>
<reference key="1">
    <citation type="journal article" date="2008" name="BMC Genomics">
        <title>The missing link: Bordetella petrii is endowed with both the metabolic versatility of environmental bacteria and virulence traits of pathogenic Bordetellae.</title>
        <authorList>
            <person name="Gross R."/>
            <person name="Guzman C.A."/>
            <person name="Sebaihia M."/>
            <person name="Martin dos Santos V.A.P."/>
            <person name="Pieper D.H."/>
            <person name="Koebnik R."/>
            <person name="Lechner M."/>
            <person name="Bartels D."/>
            <person name="Buhrmester J."/>
            <person name="Choudhuri J.V."/>
            <person name="Ebensen T."/>
            <person name="Gaigalat L."/>
            <person name="Herrmann S."/>
            <person name="Khachane A.N."/>
            <person name="Larisch C."/>
            <person name="Link S."/>
            <person name="Linke B."/>
            <person name="Meyer F."/>
            <person name="Mormann S."/>
            <person name="Nakunst D."/>
            <person name="Rueckert C."/>
            <person name="Schneiker-Bekel S."/>
            <person name="Schulze K."/>
            <person name="Voerholter F.-J."/>
            <person name="Yevsa T."/>
            <person name="Engle J.T."/>
            <person name="Goldman W.E."/>
            <person name="Puehler A."/>
            <person name="Goebel U.B."/>
            <person name="Goesmann A."/>
            <person name="Bloecker H."/>
            <person name="Kaiser O."/>
            <person name="Martinez-Arias R."/>
        </authorList>
    </citation>
    <scope>NUCLEOTIDE SEQUENCE [LARGE SCALE GENOMIC DNA]</scope>
    <source>
        <strain>ATCC BAA-461 / DSM 12804 / CCUG 43448</strain>
    </source>
</reference>